<sequence>MNIVILAAGTGKRMRSALPKVLHPLAGRPLLAHVIDTARTLKPTHLVVVIGHGAEAVRKAVAAPDVQFAVQEQQLGTGHAVQQALPLLDPSAPTLVLYGDVPLTRAGTLQALTDRAGQGGYGVLTVTLADPSGYGRIVRDAHGKVARIVEQKDATPEQLAIAEINTGIIVAPTERLGDWLAALKNDNAQGEFYLTDAVEMAIEAGLEVVTTQPDHEWETLGVNSKQQLAELERIHQRNVADALLVAGVTLADPARLDVRGTLECGRDVSIDVNCVFEGRVTLADNVTVGPNCVIRNANIGAGTRVDAFTHIEGAEVGANVVLGPYARLRPGASLHDESHVGNFVEVKNAVLGHGSKANHLTYIGDADIGARVNIGAGTITCNYDGANKFRTIIEDDVFVGSDTQLVAPVRVKRGATIAAGTTVWKDVEADALVLNDKTQTSRTGYVRPTKKKS</sequence>
<comment type="function">
    <text evidence="1">Catalyzes the last two sequential reactions in the de novo biosynthetic pathway for UDP-N-acetylglucosamine (UDP-GlcNAc). The C-terminal domain catalyzes the transfer of acetyl group from acetyl coenzyme A to glucosamine-1-phosphate (GlcN-1-P) to produce N-acetylglucosamine-1-phosphate (GlcNAc-1-P), which is converted into UDP-GlcNAc by the transfer of uridine 5-monophosphate (from uridine 5-triphosphate), a reaction catalyzed by the N-terminal domain.</text>
</comment>
<comment type="catalytic activity">
    <reaction evidence="1">
        <text>alpha-D-glucosamine 1-phosphate + acetyl-CoA = N-acetyl-alpha-D-glucosamine 1-phosphate + CoA + H(+)</text>
        <dbReference type="Rhea" id="RHEA:13725"/>
        <dbReference type="ChEBI" id="CHEBI:15378"/>
        <dbReference type="ChEBI" id="CHEBI:57287"/>
        <dbReference type="ChEBI" id="CHEBI:57288"/>
        <dbReference type="ChEBI" id="CHEBI:57776"/>
        <dbReference type="ChEBI" id="CHEBI:58516"/>
        <dbReference type="EC" id="2.3.1.157"/>
    </reaction>
</comment>
<comment type="catalytic activity">
    <reaction evidence="1">
        <text>N-acetyl-alpha-D-glucosamine 1-phosphate + UTP + H(+) = UDP-N-acetyl-alpha-D-glucosamine + diphosphate</text>
        <dbReference type="Rhea" id="RHEA:13509"/>
        <dbReference type="ChEBI" id="CHEBI:15378"/>
        <dbReference type="ChEBI" id="CHEBI:33019"/>
        <dbReference type="ChEBI" id="CHEBI:46398"/>
        <dbReference type="ChEBI" id="CHEBI:57705"/>
        <dbReference type="ChEBI" id="CHEBI:57776"/>
        <dbReference type="EC" id="2.7.7.23"/>
    </reaction>
</comment>
<comment type="cofactor">
    <cofactor evidence="1">
        <name>Mg(2+)</name>
        <dbReference type="ChEBI" id="CHEBI:18420"/>
    </cofactor>
    <text evidence="1">Binds 1 Mg(2+) ion per subunit.</text>
</comment>
<comment type="pathway">
    <text evidence="1">Nucleotide-sugar biosynthesis; UDP-N-acetyl-alpha-D-glucosamine biosynthesis; N-acetyl-alpha-D-glucosamine 1-phosphate from alpha-D-glucosamine 6-phosphate (route II): step 2/2.</text>
</comment>
<comment type="pathway">
    <text evidence="1">Nucleotide-sugar biosynthesis; UDP-N-acetyl-alpha-D-glucosamine biosynthesis; UDP-N-acetyl-alpha-D-glucosamine from N-acetyl-alpha-D-glucosamine 1-phosphate: step 1/1.</text>
</comment>
<comment type="pathway">
    <text evidence="1">Bacterial outer membrane biogenesis; LPS lipid A biosynthesis.</text>
</comment>
<comment type="subunit">
    <text evidence="1">Homotrimer.</text>
</comment>
<comment type="subcellular location">
    <subcellularLocation>
        <location evidence="1">Cytoplasm</location>
    </subcellularLocation>
</comment>
<comment type="similarity">
    <text evidence="1">In the N-terminal section; belongs to the N-acetylglucosamine-1-phosphate uridyltransferase family.</text>
</comment>
<comment type="similarity">
    <text evidence="1">In the C-terminal section; belongs to the transferase hexapeptide repeat family.</text>
</comment>
<comment type="sequence caution" evidence="2">
    <conflict type="erroneous initiation">
        <sequence resource="EMBL-CDS" id="ABE32724"/>
    </conflict>
</comment>
<proteinExistence type="inferred from homology"/>
<reference key="1">
    <citation type="journal article" date="2006" name="Proc. Natl. Acad. Sci. U.S.A.">
        <title>Burkholderia xenovorans LB400 harbors a multi-replicon, 9.73-Mbp genome shaped for versatility.</title>
        <authorList>
            <person name="Chain P.S.G."/>
            <person name="Denef V.J."/>
            <person name="Konstantinidis K.T."/>
            <person name="Vergez L.M."/>
            <person name="Agullo L."/>
            <person name="Reyes V.L."/>
            <person name="Hauser L."/>
            <person name="Cordova M."/>
            <person name="Gomez L."/>
            <person name="Gonzalez M."/>
            <person name="Land M."/>
            <person name="Lao V."/>
            <person name="Larimer F."/>
            <person name="LiPuma J.J."/>
            <person name="Mahenthiralingam E."/>
            <person name="Malfatti S.A."/>
            <person name="Marx C.J."/>
            <person name="Parnell J.J."/>
            <person name="Ramette A."/>
            <person name="Richardson P."/>
            <person name="Seeger M."/>
            <person name="Smith D."/>
            <person name="Spilker T."/>
            <person name="Sul W.J."/>
            <person name="Tsoi T.V."/>
            <person name="Ulrich L.E."/>
            <person name="Zhulin I.B."/>
            <person name="Tiedje J.M."/>
        </authorList>
    </citation>
    <scope>NUCLEOTIDE SEQUENCE [LARGE SCALE GENOMIC DNA]</scope>
    <source>
        <strain>LB400</strain>
    </source>
</reference>
<organism>
    <name type="scientific">Paraburkholderia xenovorans (strain LB400)</name>
    <dbReference type="NCBI Taxonomy" id="266265"/>
    <lineage>
        <taxon>Bacteria</taxon>
        <taxon>Pseudomonadati</taxon>
        <taxon>Pseudomonadota</taxon>
        <taxon>Betaproteobacteria</taxon>
        <taxon>Burkholderiales</taxon>
        <taxon>Burkholderiaceae</taxon>
        <taxon>Paraburkholderia</taxon>
    </lineage>
</organism>
<name>GLMU_PARXL</name>
<evidence type="ECO:0000255" key="1">
    <source>
        <dbReference type="HAMAP-Rule" id="MF_01631"/>
    </source>
</evidence>
<evidence type="ECO:0000305" key="2"/>
<dbReference type="EC" id="2.7.7.23" evidence="1"/>
<dbReference type="EC" id="2.3.1.157" evidence="1"/>
<dbReference type="EMBL" id="CP000270">
    <property type="protein sequence ID" value="ABE32724.1"/>
    <property type="status" value="ALT_INIT"/>
    <property type="molecule type" value="Genomic_DNA"/>
</dbReference>
<dbReference type="RefSeq" id="WP_038457206.1">
    <property type="nucleotide sequence ID" value="NC_007951.1"/>
</dbReference>
<dbReference type="SMR" id="Q13T65"/>
<dbReference type="STRING" id="266265.Bxe_A0207"/>
<dbReference type="KEGG" id="bxb:DR64_2380"/>
<dbReference type="KEGG" id="bxe:Bxe_A0207"/>
<dbReference type="PATRIC" id="fig|266265.5.peg.4403"/>
<dbReference type="eggNOG" id="COG1207">
    <property type="taxonomic scope" value="Bacteria"/>
</dbReference>
<dbReference type="OrthoDB" id="9775031at2"/>
<dbReference type="UniPathway" id="UPA00113">
    <property type="reaction ID" value="UER00532"/>
</dbReference>
<dbReference type="UniPathway" id="UPA00113">
    <property type="reaction ID" value="UER00533"/>
</dbReference>
<dbReference type="UniPathway" id="UPA00973"/>
<dbReference type="Proteomes" id="UP000001817">
    <property type="component" value="Chromosome 1"/>
</dbReference>
<dbReference type="GO" id="GO:0005737">
    <property type="term" value="C:cytoplasm"/>
    <property type="evidence" value="ECO:0007669"/>
    <property type="project" value="UniProtKB-SubCell"/>
</dbReference>
<dbReference type="GO" id="GO:0016020">
    <property type="term" value="C:membrane"/>
    <property type="evidence" value="ECO:0007669"/>
    <property type="project" value="GOC"/>
</dbReference>
<dbReference type="GO" id="GO:0019134">
    <property type="term" value="F:glucosamine-1-phosphate N-acetyltransferase activity"/>
    <property type="evidence" value="ECO:0007669"/>
    <property type="project" value="UniProtKB-UniRule"/>
</dbReference>
<dbReference type="GO" id="GO:0000287">
    <property type="term" value="F:magnesium ion binding"/>
    <property type="evidence" value="ECO:0007669"/>
    <property type="project" value="UniProtKB-UniRule"/>
</dbReference>
<dbReference type="GO" id="GO:0003977">
    <property type="term" value="F:UDP-N-acetylglucosamine diphosphorylase activity"/>
    <property type="evidence" value="ECO:0007669"/>
    <property type="project" value="UniProtKB-UniRule"/>
</dbReference>
<dbReference type="GO" id="GO:0000902">
    <property type="term" value="P:cell morphogenesis"/>
    <property type="evidence" value="ECO:0007669"/>
    <property type="project" value="UniProtKB-UniRule"/>
</dbReference>
<dbReference type="GO" id="GO:0071555">
    <property type="term" value="P:cell wall organization"/>
    <property type="evidence" value="ECO:0007669"/>
    <property type="project" value="UniProtKB-KW"/>
</dbReference>
<dbReference type="GO" id="GO:0009245">
    <property type="term" value="P:lipid A biosynthetic process"/>
    <property type="evidence" value="ECO:0007669"/>
    <property type="project" value="UniProtKB-UniRule"/>
</dbReference>
<dbReference type="GO" id="GO:0009252">
    <property type="term" value="P:peptidoglycan biosynthetic process"/>
    <property type="evidence" value="ECO:0007669"/>
    <property type="project" value="UniProtKB-UniRule"/>
</dbReference>
<dbReference type="GO" id="GO:0008360">
    <property type="term" value="P:regulation of cell shape"/>
    <property type="evidence" value="ECO:0007669"/>
    <property type="project" value="UniProtKB-KW"/>
</dbReference>
<dbReference type="GO" id="GO:0006048">
    <property type="term" value="P:UDP-N-acetylglucosamine biosynthetic process"/>
    <property type="evidence" value="ECO:0007669"/>
    <property type="project" value="UniProtKB-UniPathway"/>
</dbReference>
<dbReference type="CDD" id="cd02540">
    <property type="entry name" value="GT2_GlmU_N_bac"/>
    <property type="match status" value="1"/>
</dbReference>
<dbReference type="CDD" id="cd03353">
    <property type="entry name" value="LbH_GlmU_C"/>
    <property type="match status" value="1"/>
</dbReference>
<dbReference type="Gene3D" id="2.160.10.10">
    <property type="entry name" value="Hexapeptide repeat proteins"/>
    <property type="match status" value="1"/>
</dbReference>
<dbReference type="Gene3D" id="3.90.550.10">
    <property type="entry name" value="Spore Coat Polysaccharide Biosynthesis Protein SpsA, Chain A"/>
    <property type="match status" value="1"/>
</dbReference>
<dbReference type="HAMAP" id="MF_01631">
    <property type="entry name" value="GlmU"/>
    <property type="match status" value="1"/>
</dbReference>
<dbReference type="InterPro" id="IPR005882">
    <property type="entry name" value="Bifunctional_GlmU"/>
</dbReference>
<dbReference type="InterPro" id="IPR050065">
    <property type="entry name" value="GlmU-like"/>
</dbReference>
<dbReference type="InterPro" id="IPR038009">
    <property type="entry name" value="GlmU_C_LbH"/>
</dbReference>
<dbReference type="InterPro" id="IPR001451">
    <property type="entry name" value="Hexapep"/>
</dbReference>
<dbReference type="InterPro" id="IPR025877">
    <property type="entry name" value="MobA-like_NTP_Trfase"/>
</dbReference>
<dbReference type="InterPro" id="IPR029044">
    <property type="entry name" value="Nucleotide-diphossugar_trans"/>
</dbReference>
<dbReference type="InterPro" id="IPR011004">
    <property type="entry name" value="Trimer_LpxA-like_sf"/>
</dbReference>
<dbReference type="NCBIfam" id="TIGR01173">
    <property type="entry name" value="glmU"/>
    <property type="match status" value="1"/>
</dbReference>
<dbReference type="PANTHER" id="PTHR43584:SF3">
    <property type="entry name" value="BIFUNCTIONAL PROTEIN GLMU"/>
    <property type="match status" value="1"/>
</dbReference>
<dbReference type="PANTHER" id="PTHR43584">
    <property type="entry name" value="NUCLEOTIDYL TRANSFERASE"/>
    <property type="match status" value="1"/>
</dbReference>
<dbReference type="Pfam" id="PF14602">
    <property type="entry name" value="Hexapep_2"/>
    <property type="match status" value="1"/>
</dbReference>
<dbReference type="Pfam" id="PF12804">
    <property type="entry name" value="NTP_transf_3"/>
    <property type="match status" value="1"/>
</dbReference>
<dbReference type="SUPFAM" id="SSF53448">
    <property type="entry name" value="Nucleotide-diphospho-sugar transferases"/>
    <property type="match status" value="1"/>
</dbReference>
<dbReference type="SUPFAM" id="SSF51161">
    <property type="entry name" value="Trimeric LpxA-like enzymes"/>
    <property type="match status" value="1"/>
</dbReference>
<protein>
    <recommendedName>
        <fullName evidence="1">Bifunctional protein GlmU</fullName>
    </recommendedName>
    <domain>
        <recommendedName>
            <fullName evidence="1">UDP-N-acetylglucosamine pyrophosphorylase</fullName>
            <ecNumber evidence="1">2.7.7.23</ecNumber>
        </recommendedName>
        <alternativeName>
            <fullName evidence="1">N-acetylglucosamine-1-phosphate uridyltransferase</fullName>
        </alternativeName>
    </domain>
    <domain>
        <recommendedName>
            <fullName evidence="1">Glucosamine-1-phosphate N-acetyltransferase</fullName>
            <ecNumber evidence="1">2.3.1.157</ecNumber>
        </recommendedName>
    </domain>
</protein>
<feature type="chain" id="PRO_0000263121" description="Bifunctional protein GlmU">
    <location>
        <begin position="1"/>
        <end position="453"/>
    </location>
</feature>
<feature type="region of interest" description="Pyrophosphorylase" evidence="1">
    <location>
        <begin position="1"/>
        <end position="225"/>
    </location>
</feature>
<feature type="region of interest" description="Linker" evidence="1">
    <location>
        <begin position="226"/>
        <end position="246"/>
    </location>
</feature>
<feature type="region of interest" description="N-acetyltransferase" evidence="1">
    <location>
        <begin position="247"/>
        <end position="453"/>
    </location>
</feature>
<feature type="active site" description="Proton acceptor" evidence="1">
    <location>
        <position position="359"/>
    </location>
</feature>
<feature type="binding site" evidence="1">
    <location>
        <begin position="6"/>
        <end position="9"/>
    </location>
    <ligand>
        <name>UDP-N-acetyl-alpha-D-glucosamine</name>
        <dbReference type="ChEBI" id="CHEBI:57705"/>
    </ligand>
</feature>
<feature type="binding site" evidence="1">
    <location>
        <position position="20"/>
    </location>
    <ligand>
        <name>UDP-N-acetyl-alpha-D-glucosamine</name>
        <dbReference type="ChEBI" id="CHEBI:57705"/>
    </ligand>
</feature>
<feature type="binding site" evidence="1">
    <location>
        <position position="71"/>
    </location>
    <ligand>
        <name>UDP-N-acetyl-alpha-D-glucosamine</name>
        <dbReference type="ChEBI" id="CHEBI:57705"/>
    </ligand>
</feature>
<feature type="binding site" evidence="1">
    <location>
        <begin position="76"/>
        <end position="77"/>
    </location>
    <ligand>
        <name>UDP-N-acetyl-alpha-D-glucosamine</name>
        <dbReference type="ChEBI" id="CHEBI:57705"/>
    </ligand>
</feature>
<feature type="binding site" evidence="1">
    <location>
        <begin position="98"/>
        <end position="100"/>
    </location>
    <ligand>
        <name>UDP-N-acetyl-alpha-D-glucosamine</name>
        <dbReference type="ChEBI" id="CHEBI:57705"/>
    </ligand>
</feature>
<feature type="binding site" evidence="1">
    <location>
        <position position="100"/>
    </location>
    <ligand>
        <name>Mg(2+)</name>
        <dbReference type="ChEBI" id="CHEBI:18420"/>
    </ligand>
</feature>
<feature type="binding site" evidence="1">
    <location>
        <position position="135"/>
    </location>
    <ligand>
        <name>UDP-N-acetyl-alpha-D-glucosamine</name>
        <dbReference type="ChEBI" id="CHEBI:57705"/>
    </ligand>
</feature>
<feature type="binding site" evidence="1">
    <location>
        <position position="150"/>
    </location>
    <ligand>
        <name>UDP-N-acetyl-alpha-D-glucosamine</name>
        <dbReference type="ChEBI" id="CHEBI:57705"/>
    </ligand>
</feature>
<feature type="binding site" evidence="1">
    <location>
        <position position="165"/>
    </location>
    <ligand>
        <name>UDP-N-acetyl-alpha-D-glucosamine</name>
        <dbReference type="ChEBI" id="CHEBI:57705"/>
    </ligand>
</feature>
<feature type="binding site" evidence="1">
    <location>
        <position position="223"/>
    </location>
    <ligand>
        <name>Mg(2+)</name>
        <dbReference type="ChEBI" id="CHEBI:18420"/>
    </ligand>
</feature>
<feature type="binding site" evidence="1">
    <location>
        <position position="223"/>
    </location>
    <ligand>
        <name>UDP-N-acetyl-alpha-D-glucosamine</name>
        <dbReference type="ChEBI" id="CHEBI:57705"/>
    </ligand>
</feature>
<feature type="binding site" evidence="1">
    <location>
        <position position="329"/>
    </location>
    <ligand>
        <name>UDP-N-acetyl-alpha-D-glucosamine</name>
        <dbReference type="ChEBI" id="CHEBI:57705"/>
    </ligand>
</feature>
<feature type="binding site" evidence="1">
    <location>
        <position position="347"/>
    </location>
    <ligand>
        <name>UDP-N-acetyl-alpha-D-glucosamine</name>
        <dbReference type="ChEBI" id="CHEBI:57705"/>
    </ligand>
</feature>
<feature type="binding site" evidence="1">
    <location>
        <position position="362"/>
    </location>
    <ligand>
        <name>UDP-N-acetyl-alpha-D-glucosamine</name>
        <dbReference type="ChEBI" id="CHEBI:57705"/>
    </ligand>
</feature>
<feature type="binding site" evidence="1">
    <location>
        <position position="373"/>
    </location>
    <ligand>
        <name>UDP-N-acetyl-alpha-D-glucosamine</name>
        <dbReference type="ChEBI" id="CHEBI:57705"/>
    </ligand>
</feature>
<feature type="binding site" evidence="1">
    <location>
        <position position="376"/>
    </location>
    <ligand>
        <name>acetyl-CoA</name>
        <dbReference type="ChEBI" id="CHEBI:57288"/>
    </ligand>
</feature>
<feature type="binding site" evidence="1">
    <location>
        <begin position="382"/>
        <end position="383"/>
    </location>
    <ligand>
        <name>acetyl-CoA</name>
        <dbReference type="ChEBI" id="CHEBI:57288"/>
    </ligand>
</feature>
<feature type="binding site" evidence="1">
    <location>
        <position position="401"/>
    </location>
    <ligand>
        <name>acetyl-CoA</name>
        <dbReference type="ChEBI" id="CHEBI:57288"/>
    </ligand>
</feature>
<feature type="binding site" evidence="1">
    <location>
        <position position="419"/>
    </location>
    <ligand>
        <name>acetyl-CoA</name>
        <dbReference type="ChEBI" id="CHEBI:57288"/>
    </ligand>
</feature>
<keyword id="KW-0012">Acyltransferase</keyword>
<keyword id="KW-0133">Cell shape</keyword>
<keyword id="KW-0961">Cell wall biogenesis/degradation</keyword>
<keyword id="KW-0963">Cytoplasm</keyword>
<keyword id="KW-0460">Magnesium</keyword>
<keyword id="KW-0479">Metal-binding</keyword>
<keyword id="KW-0511">Multifunctional enzyme</keyword>
<keyword id="KW-0548">Nucleotidyltransferase</keyword>
<keyword id="KW-0573">Peptidoglycan synthesis</keyword>
<keyword id="KW-1185">Reference proteome</keyword>
<keyword id="KW-0677">Repeat</keyword>
<keyword id="KW-0808">Transferase</keyword>
<accession>Q13T65</accession>
<gene>
    <name evidence="1" type="primary">glmU</name>
    <name type="ordered locus">Bxeno_A4186</name>
    <name type="ORF">Bxe_A0207</name>
</gene>